<name>ACKA_STRE4</name>
<feature type="chain" id="PRO_1000116809" description="Acetate kinase">
    <location>
        <begin position="1"/>
        <end position="399"/>
    </location>
</feature>
<feature type="active site" description="Proton donor/acceptor" evidence="1">
    <location>
        <position position="146"/>
    </location>
</feature>
<feature type="binding site" evidence="1">
    <location>
        <position position="8"/>
    </location>
    <ligand>
        <name>Mg(2+)</name>
        <dbReference type="ChEBI" id="CHEBI:18420"/>
    </ligand>
</feature>
<feature type="binding site" evidence="1">
    <location>
        <position position="15"/>
    </location>
    <ligand>
        <name>ATP</name>
        <dbReference type="ChEBI" id="CHEBI:30616"/>
    </ligand>
</feature>
<feature type="binding site" evidence="1">
    <location>
        <position position="89"/>
    </location>
    <ligand>
        <name>substrate</name>
    </ligand>
</feature>
<feature type="binding site" evidence="1">
    <location>
        <begin position="206"/>
        <end position="210"/>
    </location>
    <ligand>
        <name>ATP</name>
        <dbReference type="ChEBI" id="CHEBI:30616"/>
    </ligand>
</feature>
<feature type="binding site" evidence="1">
    <location>
        <begin position="283"/>
        <end position="285"/>
    </location>
    <ligand>
        <name>ATP</name>
        <dbReference type="ChEBI" id="CHEBI:30616"/>
    </ligand>
</feature>
<feature type="binding site" evidence="1">
    <location>
        <begin position="331"/>
        <end position="335"/>
    </location>
    <ligand>
        <name>ATP</name>
        <dbReference type="ChEBI" id="CHEBI:30616"/>
    </ligand>
</feature>
<feature type="binding site" evidence="1">
    <location>
        <position position="383"/>
    </location>
    <ligand>
        <name>Mg(2+)</name>
        <dbReference type="ChEBI" id="CHEBI:18420"/>
    </ligand>
</feature>
<feature type="site" description="Transition state stabilizer" evidence="1">
    <location>
        <position position="178"/>
    </location>
</feature>
<feature type="site" description="Transition state stabilizer" evidence="1">
    <location>
        <position position="239"/>
    </location>
</feature>
<keyword id="KW-0067">ATP-binding</keyword>
<keyword id="KW-0963">Cytoplasm</keyword>
<keyword id="KW-0418">Kinase</keyword>
<keyword id="KW-0460">Magnesium</keyword>
<keyword id="KW-0479">Metal-binding</keyword>
<keyword id="KW-0547">Nucleotide-binding</keyword>
<keyword id="KW-0808">Transferase</keyword>
<proteinExistence type="inferred from homology"/>
<accession>C0M6X6</accession>
<dbReference type="EC" id="2.7.2.1" evidence="1"/>
<dbReference type="EMBL" id="FM204883">
    <property type="protein sequence ID" value="CAW92072.1"/>
    <property type="molecule type" value="Genomic_DNA"/>
</dbReference>
<dbReference type="RefSeq" id="WP_012678817.1">
    <property type="nucleotide sequence ID" value="NC_012471.1"/>
</dbReference>
<dbReference type="SMR" id="C0M6X6"/>
<dbReference type="KEGG" id="seu:SEQ_0118"/>
<dbReference type="HOGENOM" id="CLU_020352_0_1_9"/>
<dbReference type="OrthoDB" id="9802453at2"/>
<dbReference type="UniPathway" id="UPA00340">
    <property type="reaction ID" value="UER00458"/>
</dbReference>
<dbReference type="Proteomes" id="UP000001365">
    <property type="component" value="Chromosome"/>
</dbReference>
<dbReference type="GO" id="GO:0005737">
    <property type="term" value="C:cytoplasm"/>
    <property type="evidence" value="ECO:0007669"/>
    <property type="project" value="UniProtKB-SubCell"/>
</dbReference>
<dbReference type="GO" id="GO:0008776">
    <property type="term" value="F:acetate kinase activity"/>
    <property type="evidence" value="ECO:0007669"/>
    <property type="project" value="UniProtKB-UniRule"/>
</dbReference>
<dbReference type="GO" id="GO:0005524">
    <property type="term" value="F:ATP binding"/>
    <property type="evidence" value="ECO:0007669"/>
    <property type="project" value="UniProtKB-KW"/>
</dbReference>
<dbReference type="GO" id="GO:0000287">
    <property type="term" value="F:magnesium ion binding"/>
    <property type="evidence" value="ECO:0007669"/>
    <property type="project" value="UniProtKB-UniRule"/>
</dbReference>
<dbReference type="GO" id="GO:0006083">
    <property type="term" value="P:acetate metabolic process"/>
    <property type="evidence" value="ECO:0007669"/>
    <property type="project" value="TreeGrafter"/>
</dbReference>
<dbReference type="GO" id="GO:0006085">
    <property type="term" value="P:acetyl-CoA biosynthetic process"/>
    <property type="evidence" value="ECO:0007669"/>
    <property type="project" value="UniProtKB-UniRule"/>
</dbReference>
<dbReference type="CDD" id="cd24010">
    <property type="entry name" value="ASKHA_NBD_AcK_PK"/>
    <property type="match status" value="1"/>
</dbReference>
<dbReference type="Gene3D" id="3.30.420.40">
    <property type="match status" value="2"/>
</dbReference>
<dbReference type="HAMAP" id="MF_00020">
    <property type="entry name" value="Acetate_kinase"/>
    <property type="match status" value="1"/>
</dbReference>
<dbReference type="InterPro" id="IPR004372">
    <property type="entry name" value="Ac/propionate_kinase"/>
</dbReference>
<dbReference type="InterPro" id="IPR000890">
    <property type="entry name" value="Aliphatic_acid_kin_short-chain"/>
</dbReference>
<dbReference type="InterPro" id="IPR023865">
    <property type="entry name" value="Aliphatic_acid_kinase_CS"/>
</dbReference>
<dbReference type="InterPro" id="IPR043129">
    <property type="entry name" value="ATPase_NBD"/>
</dbReference>
<dbReference type="NCBIfam" id="TIGR00016">
    <property type="entry name" value="ackA"/>
    <property type="match status" value="1"/>
</dbReference>
<dbReference type="PANTHER" id="PTHR21060">
    <property type="entry name" value="ACETATE KINASE"/>
    <property type="match status" value="1"/>
</dbReference>
<dbReference type="PANTHER" id="PTHR21060:SF15">
    <property type="entry name" value="ACETATE KINASE-RELATED"/>
    <property type="match status" value="1"/>
</dbReference>
<dbReference type="Pfam" id="PF00871">
    <property type="entry name" value="Acetate_kinase"/>
    <property type="match status" value="1"/>
</dbReference>
<dbReference type="PIRSF" id="PIRSF000722">
    <property type="entry name" value="Acetate_prop_kin"/>
    <property type="match status" value="1"/>
</dbReference>
<dbReference type="PRINTS" id="PR00471">
    <property type="entry name" value="ACETATEKNASE"/>
</dbReference>
<dbReference type="SUPFAM" id="SSF53067">
    <property type="entry name" value="Actin-like ATPase domain"/>
    <property type="match status" value="2"/>
</dbReference>
<dbReference type="PROSITE" id="PS01075">
    <property type="entry name" value="ACETATE_KINASE_1"/>
    <property type="match status" value="1"/>
</dbReference>
<dbReference type="PROSITE" id="PS01076">
    <property type="entry name" value="ACETATE_KINASE_2"/>
    <property type="match status" value="1"/>
</dbReference>
<organism>
    <name type="scientific">Streptococcus equi subsp. equi (strain 4047)</name>
    <dbReference type="NCBI Taxonomy" id="553482"/>
    <lineage>
        <taxon>Bacteria</taxon>
        <taxon>Bacillati</taxon>
        <taxon>Bacillota</taxon>
        <taxon>Bacilli</taxon>
        <taxon>Lactobacillales</taxon>
        <taxon>Streptococcaceae</taxon>
        <taxon>Streptococcus</taxon>
    </lineage>
</organism>
<protein>
    <recommendedName>
        <fullName evidence="1">Acetate kinase</fullName>
        <ecNumber evidence="1">2.7.2.1</ecNumber>
    </recommendedName>
    <alternativeName>
        <fullName evidence="1">Acetokinase</fullName>
    </alternativeName>
</protein>
<sequence length="399" mass="43597">MSKTIAINAGSSSLKWQLYQMPEEKVLAQGIIERIGLTDSISTVKYDGKKEEHILDIPDHTEAVKRLLNDLIHFGIIGTYDEITGVGHRIVAGGEYFKESVVVDDKVVEQVEELAALAPLHNPGAAAGIRAFRKILPDITSVCVFDTSFHTTMQKHTYLYPIPQKYYTDYKVRKYGAHGTSHKYVAEEAAKMLGRPLDELKLITAHVGNGVSITANYHGQSVDTSMGFTPLAGPMMGTRSGDIDPAIIPYLIAQDPELKDAADVVNMLNKQSGLGGVSGISSDMRDIEAGLQANNPDAVLAYNIFIDRIKKFIGQYFAVLNGADALVFTAGMGENAPLMRQDVVNGLSWFGMEIDPEKNVFGYRGDISTAASKVKVLVISTDEELCIARDVERLKQTIS</sequence>
<evidence type="ECO:0000255" key="1">
    <source>
        <dbReference type="HAMAP-Rule" id="MF_00020"/>
    </source>
</evidence>
<gene>
    <name evidence="1" type="primary">ackA</name>
    <name type="ordered locus">SEQ_0118</name>
</gene>
<reference key="1">
    <citation type="journal article" date="2009" name="PLoS Pathog.">
        <title>Genomic evidence for the evolution of Streptococcus equi: host restriction, increased virulence, and genetic exchange with human pathogens.</title>
        <authorList>
            <person name="Holden M.T.G."/>
            <person name="Heather Z."/>
            <person name="Paillot R."/>
            <person name="Steward K.F."/>
            <person name="Webb K."/>
            <person name="Ainslie F."/>
            <person name="Jourdan T."/>
            <person name="Bason N.C."/>
            <person name="Holroyd N.E."/>
            <person name="Mungall K."/>
            <person name="Quail M.A."/>
            <person name="Sanders M."/>
            <person name="Simmonds M."/>
            <person name="Willey D."/>
            <person name="Brooks K."/>
            <person name="Aanensen D.M."/>
            <person name="Spratt B.G."/>
            <person name="Jolley K.A."/>
            <person name="Maiden M.C.J."/>
            <person name="Kehoe M."/>
            <person name="Chanter N."/>
            <person name="Bentley S.D."/>
            <person name="Robinson C."/>
            <person name="Maskell D.J."/>
            <person name="Parkhill J."/>
            <person name="Waller A.S."/>
        </authorList>
    </citation>
    <scope>NUCLEOTIDE SEQUENCE [LARGE SCALE GENOMIC DNA]</scope>
    <source>
        <strain>4047</strain>
    </source>
</reference>
<comment type="function">
    <text evidence="1">Catalyzes the formation of acetyl phosphate from acetate and ATP. Can also catalyze the reverse reaction.</text>
</comment>
<comment type="catalytic activity">
    <reaction evidence="1">
        <text>acetate + ATP = acetyl phosphate + ADP</text>
        <dbReference type="Rhea" id="RHEA:11352"/>
        <dbReference type="ChEBI" id="CHEBI:22191"/>
        <dbReference type="ChEBI" id="CHEBI:30089"/>
        <dbReference type="ChEBI" id="CHEBI:30616"/>
        <dbReference type="ChEBI" id="CHEBI:456216"/>
        <dbReference type="EC" id="2.7.2.1"/>
    </reaction>
</comment>
<comment type="cofactor">
    <cofactor evidence="1">
        <name>Mg(2+)</name>
        <dbReference type="ChEBI" id="CHEBI:18420"/>
    </cofactor>
    <cofactor evidence="1">
        <name>Mn(2+)</name>
        <dbReference type="ChEBI" id="CHEBI:29035"/>
    </cofactor>
    <text evidence="1">Mg(2+). Can also accept Mn(2+).</text>
</comment>
<comment type="pathway">
    <text evidence="1">Metabolic intermediate biosynthesis; acetyl-CoA biosynthesis; acetyl-CoA from acetate: step 1/2.</text>
</comment>
<comment type="subunit">
    <text evidence="1">Homodimer.</text>
</comment>
<comment type="subcellular location">
    <subcellularLocation>
        <location evidence="1">Cytoplasm</location>
    </subcellularLocation>
</comment>
<comment type="similarity">
    <text evidence="1">Belongs to the acetokinase family.</text>
</comment>